<name>ASR5_ORYSI</name>
<gene>
    <name evidence="5" type="primary">ASR5</name>
    <name evidence="4" type="synonym">ASR1</name>
    <name evidence="6" type="ORF">OsI_35255</name>
</gene>
<dbReference type="EMBL" id="AF039573">
    <property type="protein sequence ID" value="AAB96681.1"/>
    <property type="molecule type" value="mRNA"/>
</dbReference>
<dbReference type="EMBL" id="KF916483">
    <property type="protein sequence ID" value="AHI88413.1"/>
    <property type="molecule type" value="Genomic_DNA"/>
</dbReference>
<dbReference type="EMBL" id="KF916482">
    <property type="protein sequence ID" value="AHI88412.1"/>
    <property type="molecule type" value="Genomic_DNA"/>
</dbReference>
<dbReference type="EMBL" id="KF916484">
    <property type="protein sequence ID" value="AHI88414.1"/>
    <property type="molecule type" value="Genomic_DNA"/>
</dbReference>
<dbReference type="EMBL" id="KF916485">
    <property type="protein sequence ID" value="AHI88415.1"/>
    <property type="molecule type" value="Genomic_DNA"/>
</dbReference>
<dbReference type="EMBL" id="KF916486">
    <property type="protein sequence ID" value="AHI88416.1"/>
    <property type="molecule type" value="Genomic_DNA"/>
</dbReference>
<dbReference type="EMBL" id="KF916487">
    <property type="protein sequence ID" value="AHI88417.1"/>
    <property type="molecule type" value="Genomic_DNA"/>
</dbReference>
<dbReference type="EMBL" id="CM000136">
    <property type="protein sequence ID" value="EAY80085.1"/>
    <property type="molecule type" value="Genomic_DNA"/>
</dbReference>
<dbReference type="PIR" id="T02663">
    <property type="entry name" value="T02663"/>
</dbReference>
<dbReference type="STRING" id="39946.A2ZBV1"/>
<dbReference type="EnsemblPlants" id="BGIOSGA034434-TA">
    <property type="protein sequence ID" value="BGIOSGA034434-PA"/>
    <property type="gene ID" value="BGIOSGA034434"/>
</dbReference>
<dbReference type="EnsemblPlants" id="OsGoSa_11g0004510.01">
    <property type="protein sequence ID" value="OsGoSa_11g0004510.01"/>
    <property type="gene ID" value="OsGoSa_11g0004510"/>
</dbReference>
<dbReference type="EnsemblPlants" id="OsIR64_11g0004510.01">
    <property type="protein sequence ID" value="OsIR64_11g0004510.01"/>
    <property type="gene ID" value="OsIR64_11g0004510"/>
</dbReference>
<dbReference type="EnsemblPlants" id="OsKYG_11g0004510.01">
    <property type="protein sequence ID" value="OsKYG_11g0004510.01"/>
    <property type="gene ID" value="OsKYG_11g0004510"/>
</dbReference>
<dbReference type="EnsemblPlants" id="OsLaMu_11g0004520.01">
    <property type="protein sequence ID" value="OsLaMu_11g0004520.01"/>
    <property type="gene ID" value="OsLaMu_11g0004520"/>
</dbReference>
<dbReference type="EnsemblPlants" id="OsLima_11g0004440.01">
    <property type="protein sequence ID" value="OsLima_11g0004440.01"/>
    <property type="gene ID" value="OsLima_11g0004440"/>
</dbReference>
<dbReference type="EnsemblPlants" id="OsLiXu_11g0004480.01">
    <property type="protein sequence ID" value="OsLiXu_11g0004480.01"/>
    <property type="gene ID" value="OsLiXu_11g0004480"/>
</dbReference>
<dbReference type="EnsemblPlants" id="OsMH63_11G004580_01">
    <property type="protein sequence ID" value="OsMH63_11G004580_01"/>
    <property type="gene ID" value="OsMH63_11G004580"/>
</dbReference>
<dbReference type="EnsemblPlants" id="OsPr106_11g0004430.01">
    <property type="protein sequence ID" value="OsPr106_11g0004430.01"/>
    <property type="gene ID" value="OsPr106_11g0004430"/>
</dbReference>
<dbReference type="EnsemblPlants" id="OsZS97_11G004570_01">
    <property type="protein sequence ID" value="OsZS97_11G004570_01"/>
    <property type="gene ID" value="OsZS97_11G004570"/>
</dbReference>
<dbReference type="Gramene" id="BGIOSGA034434-TA">
    <property type="protein sequence ID" value="BGIOSGA034434-PA"/>
    <property type="gene ID" value="BGIOSGA034434"/>
</dbReference>
<dbReference type="Gramene" id="OsGoSa_11g0004510.01">
    <property type="protein sequence ID" value="OsGoSa_11g0004510.01"/>
    <property type="gene ID" value="OsGoSa_11g0004510"/>
</dbReference>
<dbReference type="Gramene" id="OsIR64_11g0004510.01">
    <property type="protein sequence ID" value="OsIR64_11g0004510.01"/>
    <property type="gene ID" value="OsIR64_11g0004510"/>
</dbReference>
<dbReference type="Gramene" id="OsKYG_11g0004510.01">
    <property type="protein sequence ID" value="OsKYG_11g0004510.01"/>
    <property type="gene ID" value="OsKYG_11g0004510"/>
</dbReference>
<dbReference type="Gramene" id="OsLaMu_11g0004520.01">
    <property type="protein sequence ID" value="OsLaMu_11g0004520.01"/>
    <property type="gene ID" value="OsLaMu_11g0004520"/>
</dbReference>
<dbReference type="Gramene" id="OsLima_11g0004440.01">
    <property type="protein sequence ID" value="OsLima_11g0004440.01"/>
    <property type="gene ID" value="OsLima_11g0004440"/>
</dbReference>
<dbReference type="Gramene" id="OsLiXu_11g0004480.01">
    <property type="protein sequence ID" value="OsLiXu_11g0004480.01"/>
    <property type="gene ID" value="OsLiXu_11g0004480"/>
</dbReference>
<dbReference type="Gramene" id="OsMH63_11G004580_01">
    <property type="protein sequence ID" value="OsMH63_11G004580_01"/>
    <property type="gene ID" value="OsMH63_11G004580"/>
</dbReference>
<dbReference type="Gramene" id="OsPr106_11g0004430.01">
    <property type="protein sequence ID" value="OsPr106_11g0004430.01"/>
    <property type="gene ID" value="OsPr106_11g0004430"/>
</dbReference>
<dbReference type="Gramene" id="OsZS97_11G004570_01">
    <property type="protein sequence ID" value="OsZS97_11G004570_01"/>
    <property type="gene ID" value="OsZS97_11G004570"/>
</dbReference>
<dbReference type="HOGENOM" id="CLU_094741_0_0_1"/>
<dbReference type="OMA" id="FHHKDKA"/>
<dbReference type="Proteomes" id="UP000007015">
    <property type="component" value="Chromosome 11"/>
</dbReference>
<dbReference type="GO" id="GO:0005737">
    <property type="term" value="C:cytoplasm"/>
    <property type="evidence" value="ECO:0007669"/>
    <property type="project" value="UniProtKB-SubCell"/>
</dbReference>
<dbReference type="GO" id="GO:0005634">
    <property type="term" value="C:nucleus"/>
    <property type="evidence" value="ECO:0007669"/>
    <property type="project" value="UniProtKB-SubCell"/>
</dbReference>
<dbReference type="GO" id="GO:0043565">
    <property type="term" value="F:sequence-specific DNA binding"/>
    <property type="evidence" value="ECO:0007669"/>
    <property type="project" value="EnsemblPlants"/>
</dbReference>
<dbReference type="GO" id="GO:0006355">
    <property type="term" value="P:regulation of DNA-templated transcription"/>
    <property type="evidence" value="ECO:0007669"/>
    <property type="project" value="EnsemblPlants"/>
</dbReference>
<dbReference type="GO" id="GO:0010044">
    <property type="term" value="P:response to aluminum ion"/>
    <property type="evidence" value="ECO:0007669"/>
    <property type="project" value="EnsemblPlants"/>
</dbReference>
<dbReference type="GO" id="GO:0006979">
    <property type="term" value="P:response to oxidative stress"/>
    <property type="evidence" value="ECO:0007669"/>
    <property type="project" value="EnsemblPlants"/>
</dbReference>
<dbReference type="GO" id="GO:0009414">
    <property type="term" value="P:response to water deprivation"/>
    <property type="evidence" value="ECO:0007669"/>
    <property type="project" value="EnsemblPlants"/>
</dbReference>
<dbReference type="InterPro" id="IPR003496">
    <property type="entry name" value="ABA_WDS"/>
</dbReference>
<dbReference type="PANTHER" id="PTHR33801">
    <property type="entry name" value="ABSCISIC STRESS-RIPENING PROTEIN 5"/>
    <property type="match status" value="1"/>
</dbReference>
<dbReference type="PANTHER" id="PTHR33801:SF24">
    <property type="entry name" value="ABSCISIC STRESS-RIPENING PROTEIN 5"/>
    <property type="match status" value="1"/>
</dbReference>
<dbReference type="Pfam" id="PF02496">
    <property type="entry name" value="ABA_WDS"/>
    <property type="match status" value="1"/>
</dbReference>
<proteinExistence type="evidence at transcript level"/>
<protein>
    <recommendedName>
        <fullName evidence="5">Abscisic stress-ripening protein 5</fullName>
    </recommendedName>
    <alternativeName>
        <fullName evidence="4">OsAsr1</fullName>
    </alternativeName>
</protein>
<organism>
    <name type="scientific">Oryza sativa subsp. indica</name>
    <name type="common">Rice</name>
    <dbReference type="NCBI Taxonomy" id="39946"/>
    <lineage>
        <taxon>Eukaryota</taxon>
        <taxon>Viridiplantae</taxon>
        <taxon>Streptophyta</taxon>
        <taxon>Embryophyta</taxon>
        <taxon>Tracheophyta</taxon>
        <taxon>Spermatophyta</taxon>
        <taxon>Magnoliopsida</taxon>
        <taxon>Liliopsida</taxon>
        <taxon>Poales</taxon>
        <taxon>Poaceae</taxon>
        <taxon>BOP clade</taxon>
        <taxon>Oryzoideae</taxon>
        <taxon>Oryzeae</taxon>
        <taxon>Oryzinae</taxon>
        <taxon>Oryza</taxon>
        <taxon>Oryza sativa</taxon>
    </lineage>
</organism>
<sequence>MAEEKHHHHLFHHKKDDEPATGVDSYGEGVYTSETVTTEVVAGGQDEYERYKKEEKQHKHKQHLGEAGALAAGAFALYEKHEAKKDPENAHRHKITEEIAATAAVGAGGYAFHEHHEKKKDHKSAEESTGEKKHHLFG</sequence>
<comment type="function">
    <text evidence="1">Involved in tolerance to aluminum. Regulates the expression of different genes that collectively contribute to the protection of the cell in response to aluminum stress.</text>
</comment>
<comment type="subcellular location">
    <subcellularLocation>
        <location evidence="1">Nucleus</location>
    </subcellularLocation>
    <subcellularLocation>
        <location evidence="1">Cytoplasm</location>
    </subcellularLocation>
</comment>
<comment type="induction">
    <text evidence="3">Induced by abscisic acid (ABA), osmotic stress and salt stress.</text>
</comment>
<comment type="similarity">
    <text evidence="5">Belongs to the abscisic acid and water stress-induced protein family.</text>
</comment>
<feature type="chain" id="PRO_0000444479" description="Abscisic stress-ripening protein 5">
    <location>
        <begin position="1"/>
        <end position="138"/>
    </location>
</feature>
<feature type="region of interest" description="Disordered" evidence="2">
    <location>
        <begin position="1"/>
        <end position="27"/>
    </location>
</feature>
<feature type="region of interest" description="Disordered" evidence="2">
    <location>
        <begin position="106"/>
        <end position="138"/>
    </location>
</feature>
<feature type="compositionally biased region" description="Basic residues" evidence="2">
    <location>
        <begin position="1"/>
        <end position="13"/>
    </location>
</feature>
<accession>A2ZBV1</accession>
<accession>O49149</accession>
<keyword id="KW-0963">Cytoplasm</keyword>
<keyword id="KW-0539">Nucleus</keyword>
<keyword id="KW-1185">Reference proteome</keyword>
<keyword id="KW-0346">Stress response</keyword>
<evidence type="ECO:0000250" key="1">
    <source>
        <dbReference type="UniProtKB" id="Q53JF7"/>
    </source>
</evidence>
<evidence type="ECO:0000256" key="2">
    <source>
        <dbReference type="SAM" id="MobiDB-lite"/>
    </source>
</evidence>
<evidence type="ECO:0000269" key="3">
    <source ref="1"/>
</evidence>
<evidence type="ECO:0000303" key="4">
    <source ref="1"/>
</evidence>
<evidence type="ECO:0000305" key="5"/>
<evidence type="ECO:0000312" key="6">
    <source>
        <dbReference type="EMBL" id="EAY80085.1"/>
    </source>
</evidence>
<reference key="1">
    <citation type="journal article" date="1999" name="Plant Sci.">
        <title>Characterization and expression pattern of an abscisic acid and osmotic stress responsive gene from rice.</title>
        <authorList>
            <person name="Vaidyanathan R."/>
            <person name="Kuruvilla S."/>
            <person name="Thomas G."/>
        </authorList>
    </citation>
    <scope>NUCLEOTIDE SEQUENCE [MRNA]</scope>
    <scope>INDUCTION</scope>
    <source>
        <strain>cv. Pokkali</strain>
    </source>
</reference>
<reference key="2">
    <citation type="submission" date="2013-11" db="EMBL/GenBank/DDBJ databases">
        <title>Isolation and characterization of the ASR gene in rice.</title>
        <authorList>
            <person name="Mondal T.K."/>
            <person name="Ganie S.A."/>
            <person name="Pani D.R."/>
        </authorList>
    </citation>
    <scope>NUCLEOTIDE SEQUENCE [GENOMIC DNA]</scope>
    <source>
        <strain>cv. IR29</strain>
        <strain>cv. IR50</strain>
        <strain>cv. Pokkali</strain>
    </source>
</reference>
<reference key="3">
    <citation type="journal article" date="2005" name="PLoS Biol.">
        <title>The genomes of Oryza sativa: a history of duplications.</title>
        <authorList>
            <person name="Yu J."/>
            <person name="Wang J."/>
            <person name="Lin W."/>
            <person name="Li S."/>
            <person name="Li H."/>
            <person name="Zhou J."/>
            <person name="Ni P."/>
            <person name="Dong W."/>
            <person name="Hu S."/>
            <person name="Zeng C."/>
            <person name="Zhang J."/>
            <person name="Zhang Y."/>
            <person name="Li R."/>
            <person name="Xu Z."/>
            <person name="Li S."/>
            <person name="Li X."/>
            <person name="Zheng H."/>
            <person name="Cong L."/>
            <person name="Lin L."/>
            <person name="Yin J."/>
            <person name="Geng J."/>
            <person name="Li G."/>
            <person name="Shi J."/>
            <person name="Liu J."/>
            <person name="Lv H."/>
            <person name="Li J."/>
            <person name="Wang J."/>
            <person name="Deng Y."/>
            <person name="Ran L."/>
            <person name="Shi X."/>
            <person name="Wang X."/>
            <person name="Wu Q."/>
            <person name="Li C."/>
            <person name="Ren X."/>
            <person name="Wang J."/>
            <person name="Wang X."/>
            <person name="Li D."/>
            <person name="Liu D."/>
            <person name="Zhang X."/>
            <person name="Ji Z."/>
            <person name="Zhao W."/>
            <person name="Sun Y."/>
            <person name="Zhang Z."/>
            <person name="Bao J."/>
            <person name="Han Y."/>
            <person name="Dong L."/>
            <person name="Ji J."/>
            <person name="Chen P."/>
            <person name="Wu S."/>
            <person name="Liu J."/>
            <person name="Xiao Y."/>
            <person name="Bu D."/>
            <person name="Tan J."/>
            <person name="Yang L."/>
            <person name="Ye C."/>
            <person name="Zhang J."/>
            <person name="Xu J."/>
            <person name="Zhou Y."/>
            <person name="Yu Y."/>
            <person name="Zhang B."/>
            <person name="Zhuang S."/>
            <person name="Wei H."/>
            <person name="Liu B."/>
            <person name="Lei M."/>
            <person name="Yu H."/>
            <person name="Li Y."/>
            <person name="Xu H."/>
            <person name="Wei S."/>
            <person name="He X."/>
            <person name="Fang L."/>
            <person name="Zhang Z."/>
            <person name="Zhang Y."/>
            <person name="Huang X."/>
            <person name="Su Z."/>
            <person name="Tong W."/>
            <person name="Li J."/>
            <person name="Tong Z."/>
            <person name="Li S."/>
            <person name="Ye J."/>
            <person name="Wang L."/>
            <person name="Fang L."/>
            <person name="Lei T."/>
            <person name="Chen C.-S."/>
            <person name="Chen H.-C."/>
            <person name="Xu Z."/>
            <person name="Li H."/>
            <person name="Huang H."/>
            <person name="Zhang F."/>
            <person name="Xu H."/>
            <person name="Li N."/>
            <person name="Zhao C."/>
            <person name="Li S."/>
            <person name="Dong L."/>
            <person name="Huang Y."/>
            <person name="Li L."/>
            <person name="Xi Y."/>
            <person name="Qi Q."/>
            <person name="Li W."/>
            <person name="Zhang B."/>
            <person name="Hu W."/>
            <person name="Zhang Y."/>
            <person name="Tian X."/>
            <person name="Jiao Y."/>
            <person name="Liang X."/>
            <person name="Jin J."/>
            <person name="Gao L."/>
            <person name="Zheng W."/>
            <person name="Hao B."/>
            <person name="Liu S.-M."/>
            <person name="Wang W."/>
            <person name="Yuan L."/>
            <person name="Cao M."/>
            <person name="McDermott J."/>
            <person name="Samudrala R."/>
            <person name="Wang J."/>
            <person name="Wong G.K.-S."/>
            <person name="Yang H."/>
        </authorList>
    </citation>
    <scope>NUCLEOTIDE SEQUENCE [LARGE SCALE GENOMIC DNA]</scope>
    <source>
        <strain>cv. 93-11</strain>
    </source>
</reference>